<proteinExistence type="evidence at protein level"/>
<evidence type="ECO:0000255" key="1">
    <source>
        <dbReference type="HAMAP-Rule" id="MF_00591"/>
    </source>
</evidence>
<evidence type="ECO:0007829" key="2">
    <source>
        <dbReference type="PDB" id="8XFX"/>
    </source>
</evidence>
<gene>
    <name evidence="1" type="primary">rrp41</name>
    <name type="ordered locus">Ta1293</name>
</gene>
<accession>Q9HIP2</accession>
<name>RRP41_THEAC</name>
<feature type="chain" id="PRO_0000139993" description="Exosome complex component Rrp41">
    <location>
        <begin position="1"/>
        <end position="248"/>
    </location>
</feature>
<feature type="strand" evidence="2">
    <location>
        <begin position="12"/>
        <end position="16"/>
    </location>
</feature>
<feature type="strand" evidence="2">
    <location>
        <begin position="30"/>
        <end position="35"/>
    </location>
</feature>
<feature type="strand" evidence="2">
    <location>
        <begin position="38"/>
        <end position="48"/>
    </location>
</feature>
<feature type="strand" evidence="2">
    <location>
        <begin position="51"/>
        <end position="62"/>
    </location>
</feature>
<feature type="helix" evidence="2">
    <location>
        <begin position="66"/>
        <end position="68"/>
    </location>
</feature>
<feature type="strand" evidence="2">
    <location>
        <begin position="71"/>
        <end position="73"/>
    </location>
</feature>
<feature type="strand" evidence="2">
    <location>
        <begin position="75"/>
        <end position="82"/>
    </location>
</feature>
<feature type="strand" evidence="2">
    <location>
        <begin position="86"/>
        <end position="89"/>
    </location>
</feature>
<feature type="helix" evidence="2">
    <location>
        <begin position="97"/>
        <end position="113"/>
    </location>
</feature>
<feature type="helix" evidence="2">
    <location>
        <begin position="116"/>
        <end position="118"/>
    </location>
</feature>
<feature type="strand" evidence="2">
    <location>
        <begin position="122"/>
        <end position="132"/>
    </location>
</feature>
<feature type="helix" evidence="2">
    <location>
        <begin position="137"/>
        <end position="151"/>
    </location>
</feature>
<feature type="strand" evidence="2">
    <location>
        <begin position="156"/>
        <end position="158"/>
    </location>
</feature>
<feature type="strand" evidence="2">
    <location>
        <begin position="161"/>
        <end position="168"/>
    </location>
</feature>
<feature type="strand" evidence="2">
    <location>
        <begin position="171"/>
        <end position="175"/>
    </location>
</feature>
<feature type="helix" evidence="2">
    <location>
        <begin position="178"/>
        <end position="183"/>
    </location>
</feature>
<feature type="strand" evidence="2">
    <location>
        <begin position="184"/>
        <end position="192"/>
    </location>
</feature>
<feature type="turn" evidence="2">
    <location>
        <begin position="194"/>
        <end position="196"/>
    </location>
</feature>
<feature type="strand" evidence="2">
    <location>
        <begin position="199"/>
        <end position="208"/>
    </location>
</feature>
<feature type="helix" evidence="2">
    <location>
        <begin position="210"/>
        <end position="236"/>
    </location>
</feature>
<comment type="function">
    <text evidence="1">Catalytic component of the exosome, which is a complex involved in RNA degradation. Has 3'-&gt;5' exoribonuclease activity. Can also synthesize heteromeric RNA-tails.</text>
</comment>
<comment type="subunit">
    <text evidence="1">Component of the archaeal exosome complex. Forms a hexameric ring-like arrangement composed of 3 Rrp41-Rrp42 heterodimers. The hexameric ring associates with a trimer of Rrp4 and/or Csl4 subunits.</text>
</comment>
<comment type="subcellular location">
    <subcellularLocation>
        <location evidence="1">Cytoplasm</location>
    </subcellularLocation>
</comment>
<comment type="similarity">
    <text evidence="1">Belongs to the RNase PH family. Rrp41 subfamily.</text>
</comment>
<protein>
    <recommendedName>
        <fullName evidence="1">Exosome complex component Rrp41</fullName>
        <ecNumber evidence="1">3.1.13.-</ecNumber>
    </recommendedName>
</protein>
<organism>
    <name type="scientific">Thermoplasma acidophilum (strain ATCC 25905 / DSM 1728 / JCM 9062 / NBRC 15155 / AMRC-C165)</name>
    <dbReference type="NCBI Taxonomy" id="273075"/>
    <lineage>
        <taxon>Archaea</taxon>
        <taxon>Methanobacteriati</taxon>
        <taxon>Thermoplasmatota</taxon>
        <taxon>Thermoplasmata</taxon>
        <taxon>Thermoplasmatales</taxon>
        <taxon>Thermoplasmataceae</taxon>
        <taxon>Thermoplasma</taxon>
    </lineage>
</organism>
<dbReference type="EC" id="3.1.13.-" evidence="1"/>
<dbReference type="EMBL" id="AL445067">
    <property type="protein sequence ID" value="CAC12415.1"/>
    <property type="molecule type" value="Genomic_DNA"/>
</dbReference>
<dbReference type="PDB" id="8XFX">
    <property type="method" value="X-ray"/>
    <property type="resolution" value="2.30 A"/>
    <property type="chains" value="A/B=1-248"/>
</dbReference>
<dbReference type="PDB" id="8XIE">
    <property type="method" value="X-ray"/>
    <property type="resolution" value="3.50 A"/>
    <property type="chains" value="A/C/D=1-248"/>
</dbReference>
<dbReference type="PDBsum" id="8XFX"/>
<dbReference type="PDBsum" id="8XIE"/>
<dbReference type="SMR" id="Q9HIP2"/>
<dbReference type="FunCoup" id="Q9HIP2">
    <property type="interactions" value="146"/>
</dbReference>
<dbReference type="STRING" id="273075.gene:9572516"/>
<dbReference type="PaxDb" id="273075-Ta1293"/>
<dbReference type="EnsemblBacteria" id="CAC12415">
    <property type="protein sequence ID" value="CAC12415"/>
    <property type="gene ID" value="CAC12415"/>
</dbReference>
<dbReference type="KEGG" id="tac:Ta1293"/>
<dbReference type="eggNOG" id="arCOG01575">
    <property type="taxonomic scope" value="Archaea"/>
</dbReference>
<dbReference type="HOGENOM" id="CLU_063514_0_0_2"/>
<dbReference type="InParanoid" id="Q9HIP2"/>
<dbReference type="OrthoDB" id="24266at2157"/>
<dbReference type="Proteomes" id="UP000001024">
    <property type="component" value="Chromosome"/>
</dbReference>
<dbReference type="GO" id="GO:0000177">
    <property type="term" value="C:cytoplasmic exosome (RNase complex)"/>
    <property type="evidence" value="ECO:0007669"/>
    <property type="project" value="TreeGrafter"/>
</dbReference>
<dbReference type="GO" id="GO:0000175">
    <property type="term" value="F:3'-5'-RNA exonuclease activity"/>
    <property type="evidence" value="ECO:0007669"/>
    <property type="project" value="UniProtKB-UniRule"/>
</dbReference>
<dbReference type="GO" id="GO:0003723">
    <property type="term" value="F:RNA binding"/>
    <property type="evidence" value="ECO:0007669"/>
    <property type="project" value="TreeGrafter"/>
</dbReference>
<dbReference type="GO" id="GO:0010467">
    <property type="term" value="P:gene expression"/>
    <property type="evidence" value="ECO:0007669"/>
    <property type="project" value="UniProtKB-ARBA"/>
</dbReference>
<dbReference type="GO" id="GO:0016075">
    <property type="term" value="P:rRNA catabolic process"/>
    <property type="evidence" value="ECO:0007669"/>
    <property type="project" value="TreeGrafter"/>
</dbReference>
<dbReference type="CDD" id="cd11366">
    <property type="entry name" value="RNase_PH_archRRP41"/>
    <property type="match status" value="1"/>
</dbReference>
<dbReference type="FunFam" id="3.30.230.70:FF:000004">
    <property type="entry name" value="Exosome complex component Rrp41"/>
    <property type="match status" value="1"/>
</dbReference>
<dbReference type="Gene3D" id="3.30.230.70">
    <property type="entry name" value="GHMP Kinase, N-terminal domain"/>
    <property type="match status" value="1"/>
</dbReference>
<dbReference type="HAMAP" id="MF_00591">
    <property type="entry name" value="Exosome_Rrp41"/>
    <property type="match status" value="1"/>
</dbReference>
<dbReference type="InterPro" id="IPR001247">
    <property type="entry name" value="ExoRNase_PH_dom1"/>
</dbReference>
<dbReference type="InterPro" id="IPR015847">
    <property type="entry name" value="ExoRNase_PH_dom2"/>
</dbReference>
<dbReference type="InterPro" id="IPR036345">
    <property type="entry name" value="ExoRNase_PH_dom2_sf"/>
</dbReference>
<dbReference type="InterPro" id="IPR027408">
    <property type="entry name" value="PNPase/RNase_PH_dom_sf"/>
</dbReference>
<dbReference type="InterPro" id="IPR020568">
    <property type="entry name" value="Ribosomal_Su5_D2-typ_SF"/>
</dbReference>
<dbReference type="InterPro" id="IPR050080">
    <property type="entry name" value="RNase_PH"/>
</dbReference>
<dbReference type="InterPro" id="IPR011807">
    <property type="entry name" value="Rrp41"/>
</dbReference>
<dbReference type="NCBIfam" id="TIGR02065">
    <property type="entry name" value="ECX1"/>
    <property type="match status" value="1"/>
</dbReference>
<dbReference type="PANTHER" id="PTHR11953">
    <property type="entry name" value="EXOSOME COMPLEX COMPONENT"/>
    <property type="match status" value="1"/>
</dbReference>
<dbReference type="PANTHER" id="PTHR11953:SF0">
    <property type="entry name" value="EXOSOME COMPLEX COMPONENT RRP41"/>
    <property type="match status" value="1"/>
</dbReference>
<dbReference type="Pfam" id="PF01138">
    <property type="entry name" value="RNase_PH"/>
    <property type="match status" value="1"/>
</dbReference>
<dbReference type="Pfam" id="PF03725">
    <property type="entry name" value="RNase_PH_C"/>
    <property type="match status" value="1"/>
</dbReference>
<dbReference type="SUPFAM" id="SSF55666">
    <property type="entry name" value="Ribonuclease PH domain 2-like"/>
    <property type="match status" value="1"/>
</dbReference>
<dbReference type="SUPFAM" id="SSF54211">
    <property type="entry name" value="Ribosomal protein S5 domain 2-like"/>
    <property type="match status" value="1"/>
</dbReference>
<keyword id="KW-0002">3D-structure</keyword>
<keyword id="KW-0963">Cytoplasm</keyword>
<keyword id="KW-0269">Exonuclease</keyword>
<keyword id="KW-0271">Exosome</keyword>
<keyword id="KW-0378">Hydrolase</keyword>
<keyword id="KW-0540">Nuclease</keyword>
<keyword id="KW-1185">Reference proteome</keyword>
<reference key="1">
    <citation type="journal article" date="2000" name="Nature">
        <title>The genome sequence of the thermoacidophilic scavenger Thermoplasma acidophilum.</title>
        <authorList>
            <person name="Ruepp A."/>
            <person name="Graml W."/>
            <person name="Santos-Martinez M.-L."/>
            <person name="Koretke K.K."/>
            <person name="Volker C."/>
            <person name="Mewes H.-W."/>
            <person name="Frishman D."/>
            <person name="Stocker S."/>
            <person name="Lupas A.N."/>
            <person name="Baumeister W."/>
        </authorList>
    </citation>
    <scope>NUCLEOTIDE SEQUENCE [LARGE SCALE GENOMIC DNA]</scope>
    <source>
        <strain>ATCC 25905 / DSM 1728 / JCM 9062 / NBRC 15155 / AMRC-C165</strain>
    </source>
</reference>
<sequence length="248" mass="27524">MKRMEANKIKLINEDNLRLDGRSFNELRPIKIQAGVLNRADGSAYIEWGGNKIMVGVYGPKEAYPKHSQDIDHAIVKARYNMAAFSVDERKRPGPDRRTMEISKVISEALSSSIMIEQFPRAEIDVYIEVLQADAGTRIAGLTAATVALADAGVPMRDMVVGCTAGKVDGHMVLDLSKEEDNYGEADIPIAIMPKTGDIVLMQMDGDVTEDELYQAMDMIFEATKRISQIQREALLNKYKIQDIGEGE</sequence>